<name>RR12_SACOF</name>
<accession>Q6ENU0</accession>
<evidence type="ECO:0000250" key="1"/>
<evidence type="ECO:0000255" key="2">
    <source>
        <dbReference type="HAMAP-Rule" id="MF_00403"/>
    </source>
</evidence>
<evidence type="ECO:0000305" key="3"/>
<geneLocation type="chloroplast"/>
<sequence>MPTVKQLIRNARQPIRNARKSAALKGCPQRRGTCARVYTINPKKPNSALRKVARVRLTSGFEITAYIPGIGHNLQEHSVVLVRGGRVKDLPGVRYRIIRGTLDAVAVKNRQQGRSKYGAKKPKK</sequence>
<gene>
    <name type="primary">rps12-A</name>
</gene>
<gene>
    <name type="primary">rps12-B</name>
</gene>
<keyword id="KW-0150">Chloroplast</keyword>
<keyword id="KW-0934">Plastid</keyword>
<keyword id="KW-0687">Ribonucleoprotein</keyword>
<keyword id="KW-0689">Ribosomal protein</keyword>
<keyword id="KW-0694">RNA-binding</keyword>
<keyword id="KW-0699">rRNA-binding</keyword>
<comment type="function">
    <text evidence="1">With S4 and S5 plays an important role in translational accuracy. Located at the interface of the 30S and 50S subunits (By similarity).</text>
</comment>
<comment type="subunit">
    <text evidence="1">Part of the 30S ribosomal subunit.</text>
</comment>
<comment type="subcellular location">
    <subcellularLocation>
        <location>Plastid</location>
        <location>Chloroplast</location>
    </subcellularLocation>
</comment>
<comment type="similarity">
    <text evidence="3">Belongs to the universal ribosomal protein uS12 family.</text>
</comment>
<reference key="1">
    <citation type="journal article" date="2004" name="DNA Res.">
        <title>Complete nucleotide sequence of the sugarcane (Saccharum officinarum) chloroplast genome: a comparative analysis of four monocot chloroplast genomes.</title>
        <authorList>
            <person name="Asano T."/>
            <person name="Tsudzuki T."/>
            <person name="Takahashi S."/>
            <person name="Shimada H."/>
            <person name="Kadowaki K."/>
        </authorList>
    </citation>
    <scope>NUCLEOTIDE SEQUENCE [LARGE SCALE GENOMIC DNA]</scope>
</reference>
<feature type="chain" id="PRO_0000146425" description="Small ribosomal subunit protein uS12cz/uS12cy">
    <location>
        <begin position="1"/>
        <end position="124"/>
    </location>
</feature>
<organism>
    <name type="scientific">Saccharum officinarum</name>
    <name type="common">Sugarcane</name>
    <dbReference type="NCBI Taxonomy" id="4547"/>
    <lineage>
        <taxon>Eukaryota</taxon>
        <taxon>Viridiplantae</taxon>
        <taxon>Streptophyta</taxon>
        <taxon>Embryophyta</taxon>
        <taxon>Tracheophyta</taxon>
        <taxon>Spermatophyta</taxon>
        <taxon>Magnoliopsida</taxon>
        <taxon>Liliopsida</taxon>
        <taxon>Poales</taxon>
        <taxon>Poaceae</taxon>
        <taxon>PACMAD clade</taxon>
        <taxon>Panicoideae</taxon>
        <taxon>Andropogonodae</taxon>
        <taxon>Andropogoneae</taxon>
        <taxon>Saccharinae</taxon>
        <taxon>Saccharum</taxon>
        <taxon>Saccharum officinarum species complex</taxon>
    </lineage>
</organism>
<dbReference type="EMBL" id="AP006714">
    <property type="protein sequence ID" value="BAD27316.1"/>
    <property type="molecule type" value="Genomic_DNA"/>
</dbReference>
<dbReference type="EMBL" id="AP006714">
    <property type="protein sequence ID" value="BAD27348.1"/>
    <property type="molecule type" value="Genomic_DNA"/>
</dbReference>
<dbReference type="SMR" id="Q6ENU0"/>
<dbReference type="GO" id="GO:0009507">
    <property type="term" value="C:chloroplast"/>
    <property type="evidence" value="ECO:0007669"/>
    <property type="project" value="UniProtKB-SubCell"/>
</dbReference>
<dbReference type="GO" id="GO:0015935">
    <property type="term" value="C:small ribosomal subunit"/>
    <property type="evidence" value="ECO:0007669"/>
    <property type="project" value="InterPro"/>
</dbReference>
<dbReference type="GO" id="GO:0019843">
    <property type="term" value="F:rRNA binding"/>
    <property type="evidence" value="ECO:0007669"/>
    <property type="project" value="UniProtKB-UniRule"/>
</dbReference>
<dbReference type="GO" id="GO:0003735">
    <property type="term" value="F:structural constituent of ribosome"/>
    <property type="evidence" value="ECO:0007669"/>
    <property type="project" value="InterPro"/>
</dbReference>
<dbReference type="GO" id="GO:0006412">
    <property type="term" value="P:translation"/>
    <property type="evidence" value="ECO:0007669"/>
    <property type="project" value="UniProtKB-UniRule"/>
</dbReference>
<dbReference type="CDD" id="cd03368">
    <property type="entry name" value="Ribosomal_S12"/>
    <property type="match status" value="1"/>
</dbReference>
<dbReference type="FunFam" id="2.40.50.140:FF:000008">
    <property type="entry name" value="30S ribosomal protein S12, chloroplastic"/>
    <property type="match status" value="1"/>
</dbReference>
<dbReference type="Gene3D" id="2.40.50.140">
    <property type="entry name" value="Nucleic acid-binding proteins"/>
    <property type="match status" value="1"/>
</dbReference>
<dbReference type="HAMAP" id="MF_00403_B">
    <property type="entry name" value="Ribosomal_uS12_B"/>
    <property type="match status" value="1"/>
</dbReference>
<dbReference type="InterPro" id="IPR012340">
    <property type="entry name" value="NA-bd_OB-fold"/>
</dbReference>
<dbReference type="InterPro" id="IPR006032">
    <property type="entry name" value="Ribosomal_uS12"/>
</dbReference>
<dbReference type="InterPro" id="IPR005679">
    <property type="entry name" value="Ribosomal_uS12_bac"/>
</dbReference>
<dbReference type="NCBIfam" id="TIGR00981">
    <property type="entry name" value="rpsL_bact"/>
    <property type="match status" value="1"/>
</dbReference>
<dbReference type="PANTHER" id="PTHR11652">
    <property type="entry name" value="30S RIBOSOMAL PROTEIN S12 FAMILY MEMBER"/>
    <property type="match status" value="1"/>
</dbReference>
<dbReference type="Pfam" id="PF00164">
    <property type="entry name" value="Ribosom_S12_S23"/>
    <property type="match status" value="1"/>
</dbReference>
<dbReference type="PIRSF" id="PIRSF002133">
    <property type="entry name" value="Ribosomal_S12/S23"/>
    <property type="match status" value="1"/>
</dbReference>
<dbReference type="PRINTS" id="PR01034">
    <property type="entry name" value="RIBOSOMALS12"/>
</dbReference>
<dbReference type="SUPFAM" id="SSF50249">
    <property type="entry name" value="Nucleic acid-binding proteins"/>
    <property type="match status" value="1"/>
</dbReference>
<dbReference type="PROSITE" id="PS00055">
    <property type="entry name" value="RIBOSOMAL_S12"/>
    <property type="match status" value="1"/>
</dbReference>
<protein>
    <recommendedName>
        <fullName evidence="2">Small ribosomal subunit protein uS12cz/uS12cy</fullName>
    </recommendedName>
    <alternativeName>
        <fullName evidence="3">30S ribosomal protein S12, chloroplastic</fullName>
    </alternativeName>
</protein>
<proteinExistence type="inferred from homology"/>